<protein>
    <recommendedName>
        <fullName>Tensin-1</fullName>
        <ecNumber evidence="8">3.1.3.-</ecNumber>
    </recommendedName>
</protein>
<accession>Q04205</accession>
<accession>A0A1L1RRE9</accession>
<accession>Q91007</accession>
<accession>Q92011</accession>
<feature type="chain" id="PRO_0000215901" description="Tensin-1">
    <location>
        <begin position="1"/>
        <end position="1744"/>
    </location>
</feature>
<feature type="domain" description="Phosphatase tensin-type" evidence="5">
    <location>
        <begin position="58"/>
        <end position="230"/>
    </location>
</feature>
<feature type="domain" description="C2 tensin-type" evidence="4">
    <location>
        <begin position="235"/>
        <end position="361"/>
    </location>
</feature>
<feature type="domain" description="SH2" evidence="3">
    <location>
        <begin position="1472"/>
        <end position="1581"/>
    </location>
</feature>
<feature type="domain" description="PTB" evidence="2">
    <location>
        <begin position="1607"/>
        <end position="1743"/>
    </location>
</feature>
<feature type="region of interest" description="Disordered" evidence="6">
    <location>
        <begin position="15"/>
        <end position="55"/>
    </location>
</feature>
<feature type="region of interest" description="Disordered" evidence="6">
    <location>
        <begin position="467"/>
        <end position="505"/>
    </location>
</feature>
<feature type="region of interest" description="Disordered" evidence="6">
    <location>
        <begin position="569"/>
        <end position="589"/>
    </location>
</feature>
<feature type="region of interest" description="Disordered" evidence="6">
    <location>
        <begin position="666"/>
        <end position="686"/>
    </location>
</feature>
<feature type="region of interest" description="Disordered" evidence="6">
    <location>
        <begin position="724"/>
        <end position="797"/>
    </location>
</feature>
<feature type="region of interest" description="Disordered" evidence="6">
    <location>
        <begin position="934"/>
        <end position="956"/>
    </location>
</feature>
<feature type="region of interest" description="Disordered" evidence="6">
    <location>
        <begin position="982"/>
        <end position="1077"/>
    </location>
</feature>
<feature type="region of interest" description="Disordered" evidence="6">
    <location>
        <begin position="1156"/>
        <end position="1437"/>
    </location>
</feature>
<feature type="compositionally biased region" description="Polar residues" evidence="6">
    <location>
        <begin position="468"/>
        <end position="481"/>
    </location>
</feature>
<feature type="compositionally biased region" description="Low complexity" evidence="6">
    <location>
        <begin position="580"/>
        <end position="589"/>
    </location>
</feature>
<feature type="compositionally biased region" description="Polar residues" evidence="6">
    <location>
        <begin position="728"/>
        <end position="753"/>
    </location>
</feature>
<feature type="compositionally biased region" description="Low complexity" evidence="6">
    <location>
        <begin position="763"/>
        <end position="773"/>
    </location>
</feature>
<feature type="compositionally biased region" description="Pro residues" evidence="6">
    <location>
        <begin position="774"/>
        <end position="783"/>
    </location>
</feature>
<feature type="compositionally biased region" description="Basic and acidic residues" evidence="6">
    <location>
        <begin position="1004"/>
        <end position="1014"/>
    </location>
</feature>
<feature type="compositionally biased region" description="Basic and acidic residues" evidence="6">
    <location>
        <begin position="1041"/>
        <end position="1054"/>
    </location>
</feature>
<feature type="compositionally biased region" description="Polar residues" evidence="6">
    <location>
        <begin position="1060"/>
        <end position="1069"/>
    </location>
</feature>
<feature type="compositionally biased region" description="Low complexity" evidence="6">
    <location>
        <begin position="1156"/>
        <end position="1169"/>
    </location>
</feature>
<feature type="compositionally biased region" description="Low complexity" evidence="6">
    <location>
        <begin position="1208"/>
        <end position="1220"/>
    </location>
</feature>
<feature type="compositionally biased region" description="Polar residues" evidence="6">
    <location>
        <begin position="1344"/>
        <end position="1355"/>
    </location>
</feature>
<feature type="compositionally biased region" description="Polar residues" evidence="6">
    <location>
        <begin position="1370"/>
        <end position="1380"/>
    </location>
</feature>
<feature type="compositionally biased region" description="Polar residues" evidence="6">
    <location>
        <begin position="1405"/>
        <end position="1420"/>
    </location>
</feature>
<feature type="compositionally biased region" description="Low complexity" evidence="6">
    <location>
        <begin position="1421"/>
        <end position="1435"/>
    </location>
</feature>
<feature type="sequence conflict" description="In Ref. 1; AAA59053 and 3; AAA49087." evidence="8" ref="1 3">
    <original>R</original>
    <variation>C</variation>
    <location>
        <position position="49"/>
    </location>
</feature>
<feature type="sequence conflict" description="In Ref. 2; AAA73949/CAA79215." evidence="8" ref="2">
    <original>M</original>
    <variation>T</variation>
    <location>
        <position position="61"/>
    </location>
</feature>
<feature type="sequence conflict" description="In Ref. 3; AAA49087." evidence="8" ref="3">
    <original>Q</original>
    <variation>PR</variation>
    <location>
        <position position="88"/>
    </location>
</feature>
<feature type="sequence conflict" description="In Ref. 1; AAA59053 and 3; AAA49087." evidence="8" ref="1 3">
    <original>T</original>
    <variation>A</variation>
    <location>
        <position position="404"/>
    </location>
</feature>
<feature type="sequence conflict" description="In Ref. 1; AAA59053 and 3; AAA49087." evidence="8" ref="1 3">
    <original>A</original>
    <variation>T</variation>
    <location>
        <position position="452"/>
    </location>
</feature>
<feature type="sequence conflict" description="In Ref. 1; AAA59053 and 3; AAA49087." evidence="8" ref="1 3">
    <original>EL</original>
    <variation>DV</variation>
    <location>
        <begin position="508"/>
        <end position="509"/>
    </location>
</feature>
<feature type="sequence conflict" description="In Ref. 1; AAA59053 and 3; AAA49087." evidence="8" ref="1 3">
    <original>P</original>
    <variation>A</variation>
    <location>
        <position position="522"/>
    </location>
</feature>
<feature type="sequence conflict" description="In Ref. 1; AAA59053 and 3; AAA49087." evidence="8" ref="1 3">
    <original>A</original>
    <variation>R</variation>
    <location>
        <position position="664"/>
    </location>
</feature>
<feature type="sequence conflict" description="In Ref. 2; AAA73949/CAA79215." evidence="8" ref="2">
    <original>A</original>
    <variation>T</variation>
    <location>
        <position position="666"/>
    </location>
</feature>
<feature type="sequence conflict" description="In Ref. 1; AAA59053, 2; AAA73949/CAA79215 and 3; AAA49087." evidence="8" ref="1 2 3">
    <original>T</original>
    <variation>A</variation>
    <location>
        <position position="681"/>
    </location>
</feature>
<feature type="sequence conflict" description="In Ref. 1; AAA59053, 2; AAA73949/CAA79215 and 3; AAA49087." evidence="8" ref="1 2 3">
    <original>P</original>
    <variation>R</variation>
    <location>
        <position position="845"/>
    </location>
</feature>
<feature type="sequence conflict" description="In Ref. 1; AAA59053 and 3; AAA49087." evidence="8" ref="1 3">
    <original>A</original>
    <variation>P</variation>
    <location>
        <position position="875"/>
    </location>
</feature>
<feature type="sequence conflict" description="In Ref. 2; AAA73949/CAA79215." evidence="8" ref="2">
    <original>P</original>
    <variation>T</variation>
    <location>
        <position position="909"/>
    </location>
</feature>
<feature type="sequence conflict" description="In Ref. 3; AAA49087." evidence="8" ref="3">
    <location>
        <begin position="1102"/>
        <end position="1113"/>
    </location>
</feature>
<feature type="sequence conflict" description="In Ref. 1; AAA59053 and 3; AAA49087." evidence="8" ref="1 3">
    <original>A</original>
    <variation>G</variation>
    <location>
        <position position="1240"/>
    </location>
</feature>
<feature type="sequence conflict" description="In Ref. 2; AAA73949/CAA79215." evidence="8" ref="2">
    <original>E</original>
    <variation>D</variation>
    <location>
        <position position="1480"/>
    </location>
</feature>
<feature type="sequence conflict" description="In Ref. 2; AAA73949/CAA79215." evidence="8" ref="2">
    <original>D</original>
    <variation>E</variation>
    <location>
        <position position="1711"/>
    </location>
</feature>
<feature type="strand" evidence="10">
    <location>
        <begin position="1607"/>
        <end position="1619"/>
    </location>
</feature>
<feature type="helix" evidence="10">
    <location>
        <begin position="1623"/>
        <end position="1635"/>
    </location>
</feature>
<feature type="strand" evidence="10">
    <location>
        <begin position="1644"/>
        <end position="1651"/>
    </location>
</feature>
<feature type="strand" evidence="10">
    <location>
        <begin position="1654"/>
        <end position="1662"/>
    </location>
</feature>
<feature type="strand" evidence="10">
    <location>
        <begin position="1667"/>
        <end position="1671"/>
    </location>
</feature>
<feature type="helix" evidence="10">
    <location>
        <begin position="1672"/>
        <end position="1674"/>
    </location>
</feature>
<feature type="strand" evidence="10">
    <location>
        <begin position="1675"/>
        <end position="1680"/>
    </location>
</feature>
<feature type="strand" evidence="10">
    <location>
        <begin position="1686"/>
        <end position="1688"/>
    </location>
</feature>
<feature type="strand" evidence="10">
    <location>
        <begin position="1690"/>
        <end position="1693"/>
    </location>
</feature>
<feature type="strand" evidence="10">
    <location>
        <begin position="1695"/>
        <end position="1703"/>
    </location>
</feature>
<feature type="strand" evidence="11">
    <location>
        <begin position="1706"/>
        <end position="1709"/>
    </location>
</feature>
<feature type="strand" evidence="10">
    <location>
        <begin position="1712"/>
        <end position="1719"/>
    </location>
</feature>
<feature type="helix" evidence="10">
    <location>
        <begin position="1726"/>
        <end position="1737"/>
    </location>
</feature>
<organism>
    <name type="scientific">Gallus gallus</name>
    <name type="common">Chicken</name>
    <dbReference type="NCBI Taxonomy" id="9031"/>
    <lineage>
        <taxon>Eukaryota</taxon>
        <taxon>Metazoa</taxon>
        <taxon>Chordata</taxon>
        <taxon>Craniata</taxon>
        <taxon>Vertebrata</taxon>
        <taxon>Euteleostomi</taxon>
        <taxon>Archelosauria</taxon>
        <taxon>Archosauria</taxon>
        <taxon>Dinosauria</taxon>
        <taxon>Saurischia</taxon>
        <taxon>Theropoda</taxon>
        <taxon>Coelurosauria</taxon>
        <taxon>Aves</taxon>
        <taxon>Neognathae</taxon>
        <taxon>Galloanserae</taxon>
        <taxon>Galliformes</taxon>
        <taxon>Phasianidae</taxon>
        <taxon>Phasianinae</taxon>
        <taxon>Gallus</taxon>
    </lineage>
</organism>
<proteinExistence type="evidence at protein level"/>
<name>TENS1_CHICK</name>
<sequence>MDFGSVMNQAATPCSPAVNYELPSPGQSITKQVDTPDATRSPRGGQAHRKASRSMSVTAAMESSCELDLVYITERIIAVSYPSTAEEQSFRSNLREVAHMLKSKHGDNYVLFNLSERRHDISKLHPKVLDFGWPDLHTPALEKICSICKAMDTWLNAAAHNVVVLHNKGNRGRLGVVVAAYMHYSNISASADQALDRFAMKRFYEDKVVPVGQPSQKRYIHYFSGLLSGSIKMNNKPLFLHHVIMHGIPNFESKGGCRPFLKIYQAMQPVYTSGIYNVQGDSQTGICITIEPGLLLKGDILLKCYHKKFRSPTRDVIFRVQFHTCAVHDLDIVFGKEDLDEAFRDERFPEYGKVEFVFSYGPEKIQGMEHLENGPSVSVDYNTSDPLIRWDSYENFNIQREDSTEGTWAEPALPGKHLEKEVGHTQGPLDGSLYAKVKKKDSLHGSIGAVNAARLPLSAAPNHVEHTLSVSSDSGNSTASTKTDRTDEPGAPGAPTGHAVLSPEEKRELDRLLVGFGLESAPPMHNHAPGPAPARLPAGPGRHVVPAQVHVNGAGTPLLAERETDILDDELPNQDGHSVGSLGTLSSLDGTTTASEAGFHEAPRVGSLSSLPNGPASYNGAEKMLKEGLYEAEPLSNGAYPYSNQNTLMGHHLRDPLAHLRPSASAQEHLAGYPQRQPASTSPAWLQPPVPQPYLYGYDLPSAHRSQSFPAVGTAKYEANLALPQAPARSTSSREAVQRGLNSWQQQGGSRPPSQLHDGGLESHSPSLSSCSPQPSPLQPMPPHSHSMPEFPRAPSRREIEQSIEALDVLMLDLAPSVHKSQSVPSAATRQDKPAAMLSSLSAQPLSGHYAQPTPQVVQPRSFGTSVGTDPLAKAYSPGPLVPAARSTAEPDYTVHEYRETYTPYSYQPVPEPRSYGSAPASILPLSASYSPAGSQQLLVSSPPSPTAPAQSQLPHKGLESYEDLSRSGEEPLNLEGLVAHRVAGVQSREKSPEESTVPARRRTPSDSHYEKSSPEPGSPRSPTVLSPEVVSTIAANPGGRPKEPHLHSYKEAFEEMESASPSSLTSGGVRSPPGLAKTPLSALGLKPHNPADILLHPVGELEGEAGADSEEEPRSYVESVARTATTGRAGNLPAAQPVGLEVPARNGAFGNSFTVPSPVSTSSPIHSVDGASLRSYPSEGSPHGTVTPPHAVAETAYRSPMVSQTPSAHSSYQTSSPSSFQAGTLGSPYASPDYPDGRAGFQPDPQARQQPQVSVVGVHALPGSPRTLHRTVATNTPPSPGFGRRAANPAVASVPGSPGLGRHTVSPHAPPGSPSLARHQMAAVPPGSPMYGYSSPEERRPTLSRQSSASGYQPPSTPSFPVSPAYYPGTSTPHSSSPDSAAYRQGSPTPQPALPEKRRMSAGERSNSLPNYATVNGKASSPLSSGMSSPSSGSAVAFSHTLPDFSKFSMPDISPETRANVKFVQDTSKYWYKPDISREQAIALLKDREPGAFIIRDSHSFRGAYGLAMKVASPPPTVMQQNKKGDITNELVRHFLIETSPRGVKLKGCPNEPNFGCLSALVYQHSIMPLALPCKLVIPDRDPMEEKKDAASTTNSATDLLKQGAACNVLFINSVEMESLTGPQAISKAVAETLVADPTPTATIVHFKVSAQGITLTDNQRKLFFRRHYPLNTVTFCDLDPQERKWTKTDGSGPAKLFGFVARKQGSTTDNVCHLFAELDPDQPAAAIVNFVSRVMLGSGQKR</sequence>
<dbReference type="EC" id="3.1.3.-" evidence="8"/>
<dbReference type="EMBL" id="M96625">
    <property type="protein sequence ID" value="AAA59053.1"/>
    <property type="molecule type" value="mRNA"/>
</dbReference>
<dbReference type="EMBL" id="L06662">
    <property type="protein sequence ID" value="AAA73949.1"/>
    <property type="status" value="ALT_INIT"/>
    <property type="molecule type" value="mRNA"/>
</dbReference>
<dbReference type="EMBL" id="Z18529">
    <property type="protein sequence ID" value="CAA79215.1"/>
    <property type="status" value="ALT_INIT"/>
    <property type="molecule type" value="mRNA"/>
</dbReference>
<dbReference type="EMBL" id="M74165">
    <property type="protein sequence ID" value="AAA49087.1"/>
    <property type="molecule type" value="mRNA"/>
</dbReference>
<dbReference type="EMBL" id="AADN05000350">
    <property type="status" value="NOT_ANNOTATED_CDS"/>
    <property type="molecule type" value="Genomic_DNA"/>
</dbReference>
<dbReference type="EMBL" id="M63606">
    <property type="status" value="NOT_ANNOTATED_CDS"/>
    <property type="molecule type" value="mRNA"/>
</dbReference>
<dbReference type="EMBL" id="X66286">
    <property type="protein sequence ID" value="CAA46992.1"/>
    <property type="molecule type" value="mRNA"/>
</dbReference>
<dbReference type="PIR" id="A54970">
    <property type="entry name" value="A54970"/>
</dbReference>
<dbReference type="PIR" id="A57075">
    <property type="entry name" value="A57075"/>
</dbReference>
<dbReference type="PIR" id="S27939">
    <property type="entry name" value="S27939"/>
</dbReference>
<dbReference type="RefSeq" id="NP_990786.1">
    <property type="nucleotide sequence ID" value="NM_205455.1"/>
</dbReference>
<dbReference type="PDB" id="1WVH">
    <property type="method" value="X-ray"/>
    <property type="resolution" value="1.50 A"/>
    <property type="chains" value="A=1605-1738"/>
</dbReference>
<dbReference type="PDB" id="2GJY">
    <property type="method" value="NMR"/>
    <property type="chains" value="A=1605-1744"/>
</dbReference>
<dbReference type="PDBsum" id="1WVH"/>
<dbReference type="PDBsum" id="2GJY"/>
<dbReference type="BMRB" id="Q04205"/>
<dbReference type="SMR" id="Q04205"/>
<dbReference type="DIP" id="DIP-56927N"/>
<dbReference type="FunCoup" id="Q04205">
    <property type="interactions" value="1687"/>
</dbReference>
<dbReference type="IntAct" id="Q04205">
    <property type="interactions" value="4"/>
</dbReference>
<dbReference type="STRING" id="9031.ENSGALP00000061378"/>
<dbReference type="GlyGen" id="Q04205">
    <property type="glycosylation" value="4 sites"/>
</dbReference>
<dbReference type="DNASU" id="396439"/>
<dbReference type="KEGG" id="gga:396439"/>
<dbReference type="VEuPathDB" id="HostDB:geneid_396439"/>
<dbReference type="InParanoid" id="Q04205"/>
<dbReference type="OrthoDB" id="6273691at2759"/>
<dbReference type="PhylomeDB" id="Q04205"/>
<dbReference type="EvolutionaryTrace" id="Q04205"/>
<dbReference type="PRO" id="PR:Q04205"/>
<dbReference type="Proteomes" id="UP000000539">
    <property type="component" value="Chromosome 7"/>
</dbReference>
<dbReference type="Bgee" id="ENSGALG00000041013">
    <property type="expression patterns" value="Expressed in heart and 13 other cell types or tissues"/>
</dbReference>
<dbReference type="GO" id="GO:0009986">
    <property type="term" value="C:cell surface"/>
    <property type="evidence" value="ECO:0007669"/>
    <property type="project" value="UniProtKB-SubCell"/>
</dbReference>
<dbReference type="GO" id="GO:0005737">
    <property type="term" value="C:cytoplasm"/>
    <property type="evidence" value="ECO:0007669"/>
    <property type="project" value="UniProtKB-KW"/>
</dbReference>
<dbReference type="GO" id="GO:0005856">
    <property type="term" value="C:cytoskeleton"/>
    <property type="evidence" value="ECO:0007669"/>
    <property type="project" value="UniProtKB-SubCell"/>
</dbReference>
<dbReference type="GO" id="GO:0005925">
    <property type="term" value="C:focal adhesion"/>
    <property type="evidence" value="ECO:0000318"/>
    <property type="project" value="GO_Central"/>
</dbReference>
<dbReference type="GO" id="GO:0003779">
    <property type="term" value="F:actin binding"/>
    <property type="evidence" value="ECO:0007669"/>
    <property type="project" value="UniProtKB-KW"/>
</dbReference>
<dbReference type="GO" id="GO:0004721">
    <property type="term" value="F:phosphoprotein phosphatase activity"/>
    <property type="evidence" value="ECO:0007669"/>
    <property type="project" value="UniProtKB-KW"/>
</dbReference>
<dbReference type="GO" id="GO:0010761">
    <property type="term" value="P:fibroblast migration"/>
    <property type="evidence" value="ECO:0000318"/>
    <property type="project" value="GO_Central"/>
</dbReference>
<dbReference type="CDD" id="cd01213">
    <property type="entry name" value="PTB_tensin"/>
    <property type="match status" value="1"/>
</dbReference>
<dbReference type="CDD" id="cd14560">
    <property type="entry name" value="PTP_tensin-1"/>
    <property type="match status" value="1"/>
</dbReference>
<dbReference type="CDD" id="cd09927">
    <property type="entry name" value="SH2_Tensin_like"/>
    <property type="match status" value="1"/>
</dbReference>
<dbReference type="FunFam" id="2.30.29.30:FF:000039">
    <property type="entry name" value="Tensin 1"/>
    <property type="match status" value="1"/>
</dbReference>
<dbReference type="FunFam" id="3.30.505.10:FF:000002">
    <property type="entry name" value="Tensin 1"/>
    <property type="match status" value="1"/>
</dbReference>
<dbReference type="FunFam" id="2.60.40.1110:FF:000002">
    <property type="entry name" value="tensin-1 isoform X2"/>
    <property type="match status" value="1"/>
</dbReference>
<dbReference type="FunFam" id="3.90.190.10:FF:000010">
    <property type="entry name" value="tensin-1 isoform X2"/>
    <property type="match status" value="1"/>
</dbReference>
<dbReference type="Gene3D" id="2.60.40.1110">
    <property type="match status" value="1"/>
</dbReference>
<dbReference type="Gene3D" id="2.30.29.30">
    <property type="entry name" value="Pleckstrin-homology domain (PH domain)/Phosphotyrosine-binding domain (PTB)"/>
    <property type="match status" value="1"/>
</dbReference>
<dbReference type="Gene3D" id="3.90.190.10">
    <property type="entry name" value="Protein tyrosine phosphatase superfamily"/>
    <property type="match status" value="1"/>
</dbReference>
<dbReference type="Gene3D" id="3.30.505.10">
    <property type="entry name" value="SH2 domain"/>
    <property type="match status" value="1"/>
</dbReference>
<dbReference type="InterPro" id="IPR035892">
    <property type="entry name" value="C2_domain_sf"/>
</dbReference>
<dbReference type="InterPro" id="IPR011993">
    <property type="entry name" value="PH-like_dom_sf"/>
</dbReference>
<dbReference type="InterPro" id="IPR029021">
    <property type="entry name" value="Prot-tyrosine_phosphatase-like"/>
</dbReference>
<dbReference type="InterPro" id="IPR013625">
    <property type="entry name" value="PTB"/>
</dbReference>
<dbReference type="InterPro" id="IPR006020">
    <property type="entry name" value="PTB/PI_dom"/>
</dbReference>
<dbReference type="InterPro" id="IPR000980">
    <property type="entry name" value="SH2"/>
</dbReference>
<dbReference type="InterPro" id="IPR036860">
    <property type="entry name" value="SH2_dom_sf"/>
</dbReference>
<dbReference type="InterPro" id="IPR035012">
    <property type="entry name" value="Tensin-like_SH2"/>
</dbReference>
<dbReference type="InterPro" id="IPR014020">
    <property type="entry name" value="Tensin_C2-dom"/>
</dbReference>
<dbReference type="InterPro" id="IPR029023">
    <property type="entry name" value="Tensin_phosphatase"/>
</dbReference>
<dbReference type="InterPro" id="IPR033929">
    <property type="entry name" value="Tensin_PTB"/>
</dbReference>
<dbReference type="InterPro" id="IPR051484">
    <property type="entry name" value="Tensin_PTEN_phosphatase"/>
</dbReference>
<dbReference type="InterPro" id="IPR003595">
    <property type="entry name" value="Tyr_Pase_cat"/>
</dbReference>
<dbReference type="PANTHER" id="PTHR45734">
    <property type="entry name" value="TENSIN"/>
    <property type="match status" value="1"/>
</dbReference>
<dbReference type="PANTHER" id="PTHR45734:SF3">
    <property type="entry name" value="TENSIN-1"/>
    <property type="match status" value="1"/>
</dbReference>
<dbReference type="Pfam" id="PF08416">
    <property type="entry name" value="PTB"/>
    <property type="match status" value="1"/>
</dbReference>
<dbReference type="Pfam" id="PF10409">
    <property type="entry name" value="PTEN_C2"/>
    <property type="match status" value="1"/>
</dbReference>
<dbReference type="Pfam" id="PF00017">
    <property type="entry name" value="SH2"/>
    <property type="match status" value="1"/>
</dbReference>
<dbReference type="SMART" id="SM00462">
    <property type="entry name" value="PTB"/>
    <property type="match status" value="1"/>
</dbReference>
<dbReference type="SMART" id="SM01326">
    <property type="entry name" value="PTEN_C2"/>
    <property type="match status" value="1"/>
</dbReference>
<dbReference type="SMART" id="SM00404">
    <property type="entry name" value="PTPc_motif"/>
    <property type="match status" value="1"/>
</dbReference>
<dbReference type="SMART" id="SM00252">
    <property type="entry name" value="SH2"/>
    <property type="match status" value="1"/>
</dbReference>
<dbReference type="SUPFAM" id="SSF52799">
    <property type="entry name" value="(Phosphotyrosine protein) phosphatases II"/>
    <property type="match status" value="1"/>
</dbReference>
<dbReference type="SUPFAM" id="SSF49562">
    <property type="entry name" value="C2 domain (Calcium/lipid-binding domain, CaLB)"/>
    <property type="match status" value="1"/>
</dbReference>
<dbReference type="SUPFAM" id="SSF50729">
    <property type="entry name" value="PH domain-like"/>
    <property type="match status" value="1"/>
</dbReference>
<dbReference type="SUPFAM" id="SSF55550">
    <property type="entry name" value="SH2 domain"/>
    <property type="match status" value="1"/>
</dbReference>
<dbReference type="PROSITE" id="PS51182">
    <property type="entry name" value="C2_TENSIN"/>
    <property type="match status" value="1"/>
</dbReference>
<dbReference type="PROSITE" id="PS51181">
    <property type="entry name" value="PPASE_TENSIN"/>
    <property type="match status" value="1"/>
</dbReference>
<dbReference type="PROSITE" id="PS50001">
    <property type="entry name" value="SH2"/>
    <property type="match status" value="1"/>
</dbReference>
<evidence type="ECO:0000250" key="1">
    <source>
        <dbReference type="UniProtKB" id="Q9HBL0"/>
    </source>
</evidence>
<evidence type="ECO:0000255" key="2"/>
<evidence type="ECO:0000255" key="3">
    <source>
        <dbReference type="PROSITE-ProRule" id="PRU00191"/>
    </source>
</evidence>
<evidence type="ECO:0000255" key="4">
    <source>
        <dbReference type="PROSITE-ProRule" id="PRU00589"/>
    </source>
</evidence>
<evidence type="ECO:0000255" key="5">
    <source>
        <dbReference type="PROSITE-ProRule" id="PRU00590"/>
    </source>
</evidence>
<evidence type="ECO:0000256" key="6">
    <source>
        <dbReference type="SAM" id="MobiDB-lite"/>
    </source>
</evidence>
<evidence type="ECO:0000269" key="7">
    <source>
    </source>
</evidence>
<evidence type="ECO:0000305" key="8"/>
<evidence type="ECO:0000312" key="9">
    <source>
        <dbReference type="Proteomes" id="UP000000539"/>
    </source>
</evidence>
<evidence type="ECO:0007829" key="10">
    <source>
        <dbReference type="PDB" id="1WVH"/>
    </source>
</evidence>
<evidence type="ECO:0007829" key="11">
    <source>
        <dbReference type="PDB" id="2GJY"/>
    </source>
</evidence>
<comment type="function">
    <text evidence="1">May act as a protein phosphatase and/or a lipid phosphatase. Involved in fibrillar adhesion formation. Plays a role in cell polarization and migration. May be involved in cartilage development and in linking signal transduction pathways to the cytoskeleton.</text>
</comment>
<comment type="subunit">
    <text evidence="7">Binds to actin filaments. Interacts with phosphotyrosine-containing proteins (PubMed:1708917).</text>
</comment>
<comment type="interaction">
    <interactant intactId="EBI-2607590">
        <id>Q04205</id>
    </interactant>
    <interactant intactId="EBI-702093">
        <id>P56945</id>
        <label>BCAR1</label>
    </interactant>
    <organismsDiffer>true</organismsDiffer>
    <experiments>2</experiments>
</comment>
<comment type="interaction">
    <interactant intactId="EBI-2607590">
        <id>Q04205</id>
    </interactant>
    <interactant intactId="EBI-15638708">
        <id>Q96QB1-1</id>
        <label>DLC1</label>
    </interactant>
    <organismsDiffer>true</organismsDiffer>
    <experiments>7</experiments>
</comment>
<comment type="subcellular location">
    <subcellularLocation>
        <location evidence="1">Cell surface</location>
    </subcellularLocation>
    <subcellularLocation>
        <location evidence="1">Cell junction</location>
        <location evidence="1">Focal adhesion</location>
    </subcellularLocation>
    <subcellularLocation>
        <location evidence="1">Cytoplasm</location>
        <location evidence="1">Cytoskeleton</location>
    </subcellularLocation>
</comment>
<comment type="tissue specificity">
    <text>Heart, gizzard, lung and skeletal muscle.</text>
</comment>
<comment type="PTM">
    <text evidence="7">Tyrosine phosphorylated.</text>
</comment>
<comment type="similarity">
    <text evidence="8">Belongs to the PTEN phosphatase protein family.</text>
</comment>
<comment type="sequence caution" evidence="8">
    <conflict type="erroneous initiation">
        <sequence resource="EMBL-CDS" id="AAA73949"/>
    </conflict>
    <text>Extended N-terminus.</text>
</comment>
<comment type="sequence caution" evidence="8">
    <conflict type="erroneous initiation">
        <sequence resource="EMBL-CDS" id="CAA79215"/>
    </conflict>
    <text>Extended N-terminus.</text>
</comment>
<comment type="sequence caution" evidence="8">
    <conflict type="miscellaneous discrepancy">
        <sequence resource="EMBL" id="M63606"/>
    </conflict>
    <text>Probable cloning artifact.</text>
</comment>
<reference key="1">
    <citation type="journal article" date="1994" name="J. Biol. Chem.">
        <title>Molecular cloning of chick cardiac muscle tensin. Full-length cDNA sequence, expression, and characterization.</title>
        <authorList>
            <person name="Lo S.H."/>
            <person name="An Q."/>
            <person name="Bao S."/>
            <person name="Wong W.K."/>
            <person name="Liu Y."/>
            <person name="Janmey P.A."/>
            <person name="Hartwig J.H."/>
            <person name="Chen L.B."/>
        </authorList>
    </citation>
    <scope>NUCLEOTIDE SEQUENCE [MRNA]</scope>
    <source>
        <tissue>Heart</tissue>
    </source>
</reference>
<reference key="2">
    <citation type="journal article" date="1995" name="J. Cell Biol.">
        <title>Molecular cloning, expression, and mapping of the high affinity actin-capping domain of chicken cardiac tensin.</title>
        <authorList>
            <person name="Chuang J.Z."/>
            <person name="Lin D.C."/>
            <person name="Lin S."/>
        </authorList>
    </citation>
    <scope>NUCLEOTIDE SEQUENCE [MRNA]</scope>
    <source>
        <tissue>Heart</tissue>
    </source>
</reference>
<reference key="3">
    <citation type="submission" date="1991-08" db="EMBL/GenBank/DDBJ databases">
        <authorList>
            <person name="Chen L.B."/>
        </authorList>
    </citation>
    <scope>NUCLEOTIDE SEQUENCE [MRNA]</scope>
</reference>
<reference evidence="9" key="4">
    <citation type="journal article" date="2004" name="Nature">
        <title>Sequence and comparative analysis of the chicken genome provide unique perspectives on vertebrate evolution.</title>
        <authorList>
            <person name="Hillier L.W."/>
            <person name="Miller W."/>
            <person name="Birney E."/>
            <person name="Warren W."/>
            <person name="Hardison R.C."/>
            <person name="Ponting C.P."/>
            <person name="Bork P."/>
            <person name="Burt D.W."/>
            <person name="Groenen M.A.M."/>
            <person name="Delany M.E."/>
            <person name="Dodgson J.B."/>
            <person name="Chinwalla A.T."/>
            <person name="Cliften P.F."/>
            <person name="Clifton S.W."/>
            <person name="Delehaunty K.D."/>
            <person name="Fronick C."/>
            <person name="Fulton R.S."/>
            <person name="Graves T.A."/>
            <person name="Kremitzki C."/>
            <person name="Layman D."/>
            <person name="Magrini V."/>
            <person name="McPherson J.D."/>
            <person name="Miner T.L."/>
            <person name="Minx P."/>
            <person name="Nash W.E."/>
            <person name="Nhan M.N."/>
            <person name="Nelson J.O."/>
            <person name="Oddy L.G."/>
            <person name="Pohl C.S."/>
            <person name="Randall-Maher J."/>
            <person name="Smith S.M."/>
            <person name="Wallis J.W."/>
            <person name="Yang S.-P."/>
            <person name="Romanov M.N."/>
            <person name="Rondelli C.M."/>
            <person name="Paton B."/>
            <person name="Smith J."/>
            <person name="Morrice D."/>
            <person name="Daniels L."/>
            <person name="Tempest H.G."/>
            <person name="Robertson L."/>
            <person name="Masabanda J.S."/>
            <person name="Griffin D.K."/>
            <person name="Vignal A."/>
            <person name="Fillon V."/>
            <person name="Jacobbson L."/>
            <person name="Kerje S."/>
            <person name="Andersson L."/>
            <person name="Crooijmans R.P."/>
            <person name="Aerts J."/>
            <person name="van der Poel J.J."/>
            <person name="Ellegren H."/>
            <person name="Caldwell R.B."/>
            <person name="Hubbard S.J."/>
            <person name="Grafham D.V."/>
            <person name="Kierzek A.M."/>
            <person name="McLaren S.R."/>
            <person name="Overton I.M."/>
            <person name="Arakawa H."/>
            <person name="Beattie K.J."/>
            <person name="Bezzubov Y."/>
            <person name="Boardman P.E."/>
            <person name="Bonfield J.K."/>
            <person name="Croning M.D.R."/>
            <person name="Davies R.M."/>
            <person name="Francis M.D."/>
            <person name="Humphray S.J."/>
            <person name="Scott C.E."/>
            <person name="Taylor R.G."/>
            <person name="Tickle C."/>
            <person name="Brown W.R.A."/>
            <person name="Rogers J."/>
            <person name="Buerstedde J.-M."/>
            <person name="Wilson S.A."/>
            <person name="Stubbs L."/>
            <person name="Ovcharenko I."/>
            <person name="Gordon L."/>
            <person name="Lucas S."/>
            <person name="Miller M.M."/>
            <person name="Inoko H."/>
            <person name="Shiina T."/>
            <person name="Kaufman J."/>
            <person name="Salomonsen J."/>
            <person name="Skjoedt K."/>
            <person name="Wong G.K.-S."/>
            <person name="Wang J."/>
            <person name="Liu B."/>
            <person name="Wang J."/>
            <person name="Yu J."/>
            <person name="Yang H."/>
            <person name="Nefedov M."/>
            <person name="Koriabine M."/>
            <person name="Dejong P.J."/>
            <person name="Goodstadt L."/>
            <person name="Webber C."/>
            <person name="Dickens N.J."/>
            <person name="Letunic I."/>
            <person name="Suyama M."/>
            <person name="Torrents D."/>
            <person name="von Mering C."/>
            <person name="Zdobnov E.M."/>
            <person name="Makova K."/>
            <person name="Nekrutenko A."/>
            <person name="Elnitski L."/>
            <person name="Eswara P."/>
            <person name="King D.C."/>
            <person name="Yang S.-P."/>
            <person name="Tyekucheva S."/>
            <person name="Radakrishnan A."/>
            <person name="Harris R.S."/>
            <person name="Chiaromonte F."/>
            <person name="Taylor J."/>
            <person name="He J."/>
            <person name="Rijnkels M."/>
            <person name="Griffiths-Jones S."/>
            <person name="Ureta-Vidal A."/>
            <person name="Hoffman M.M."/>
            <person name="Severin J."/>
            <person name="Searle S.M.J."/>
            <person name="Law A.S."/>
            <person name="Speed D."/>
            <person name="Waddington D."/>
            <person name="Cheng Z."/>
            <person name="Tuzun E."/>
            <person name="Eichler E."/>
            <person name="Bao Z."/>
            <person name="Flicek P."/>
            <person name="Shteynberg D.D."/>
            <person name="Brent M.R."/>
            <person name="Bye J.M."/>
            <person name="Huckle E.J."/>
            <person name="Chatterji S."/>
            <person name="Dewey C."/>
            <person name="Pachter L."/>
            <person name="Kouranov A."/>
            <person name="Mourelatos Z."/>
            <person name="Hatzigeorgiou A.G."/>
            <person name="Paterson A.H."/>
            <person name="Ivarie R."/>
            <person name="Brandstrom M."/>
            <person name="Axelsson E."/>
            <person name="Backstrom N."/>
            <person name="Berlin S."/>
            <person name="Webster M.T."/>
            <person name="Pourquie O."/>
            <person name="Reymond A."/>
            <person name="Ucla C."/>
            <person name="Antonarakis S.E."/>
            <person name="Long M."/>
            <person name="Emerson J.J."/>
            <person name="Betran E."/>
            <person name="Dupanloup I."/>
            <person name="Kaessmann H."/>
            <person name="Hinrichs A.S."/>
            <person name="Bejerano G."/>
            <person name="Furey T.S."/>
            <person name="Harte R.A."/>
            <person name="Raney B."/>
            <person name="Siepel A."/>
            <person name="Kent W.J."/>
            <person name="Haussler D."/>
            <person name="Eyras E."/>
            <person name="Castelo R."/>
            <person name="Abril J.F."/>
            <person name="Castellano S."/>
            <person name="Camara F."/>
            <person name="Parra G."/>
            <person name="Guigo R."/>
            <person name="Bourque G."/>
            <person name="Tesler G."/>
            <person name="Pevzner P.A."/>
            <person name="Smit A."/>
            <person name="Fulton L.A."/>
            <person name="Mardis E.R."/>
            <person name="Wilson R.K."/>
        </authorList>
    </citation>
    <scope>NUCLEOTIDE SEQUENCE [LARGE SCALE GENOMIC DNA]</scope>
    <source>
        <strain evidence="9">Red jungle fowl</strain>
    </source>
</reference>
<reference key="5">
    <citation type="journal article" date="1991" name="Science">
        <title>Presence of an SH2 domain in the actin-binding protein tensin.</title>
        <authorList>
            <person name="Davis S."/>
            <person name="Lu M.L."/>
            <person name="Lo S.H."/>
            <person name="Lin S."/>
            <person name="Butler J.A."/>
            <person name="Druker B.J."/>
            <person name="Roberts T.M."/>
            <person name="An Q."/>
            <person name="Chen L.B."/>
        </authorList>
    </citation>
    <scope>NUCLEOTIDE SEQUENCE [MRNA] OF 888-1239</scope>
    <scope>DOMAIN SH2</scope>
    <scope>PHOSPHORYLATION</scope>
</reference>
<reference key="6">
    <citation type="journal article" date="1993" name="Eur. J. Biochem.">
        <title>Modulation of tensin and vimentin expression in chick embryo developing cartilage and cultured differentiating chondrocytes.</title>
        <authorList>
            <person name="van de Werken R."/>
            <person name="Gennari M."/>
            <person name="Tavella S."/>
            <person name="Bet P."/>
            <person name="Molina F."/>
            <person name="Lin S."/>
            <person name="Cancedda R."/>
            <person name="Castagnola P."/>
        </authorList>
    </citation>
    <scope>NUCLEOTIDE SEQUENCE [MRNA] OF 1469-1744</scope>
    <source>
        <tissue>Embryonic chondrocyte</tissue>
        <tissue>Embryonic heart</tissue>
    </source>
</reference>
<gene>
    <name type="primary">TNS1</name>
    <name type="synonym">TNS</name>
</gene>
<keyword id="KW-0002">3D-structure</keyword>
<keyword id="KW-0009">Actin-binding</keyword>
<keyword id="KW-0965">Cell junction</keyword>
<keyword id="KW-0963">Cytoplasm</keyword>
<keyword id="KW-0206">Cytoskeleton</keyword>
<keyword id="KW-0378">Hydrolase</keyword>
<keyword id="KW-0597">Phosphoprotein</keyword>
<keyword id="KW-0904">Protein phosphatase</keyword>
<keyword id="KW-1185">Reference proteome</keyword>
<keyword id="KW-0727">SH2 domain</keyword>